<name>ENO_LEPIC</name>
<accession>Q72QZ8</accession>
<dbReference type="EC" id="4.2.1.11" evidence="1"/>
<dbReference type="EMBL" id="AE016823">
    <property type="protein sequence ID" value="AAS70536.1"/>
    <property type="molecule type" value="Genomic_DNA"/>
</dbReference>
<dbReference type="RefSeq" id="WP_000018115.1">
    <property type="nucleotide sequence ID" value="NC_005823.1"/>
</dbReference>
<dbReference type="SMR" id="Q72QZ8"/>
<dbReference type="GeneID" id="61141848"/>
<dbReference type="KEGG" id="lic:LIC_11954"/>
<dbReference type="HOGENOM" id="CLU_031223_2_1_12"/>
<dbReference type="UniPathway" id="UPA00109">
    <property type="reaction ID" value="UER00187"/>
</dbReference>
<dbReference type="Proteomes" id="UP000007037">
    <property type="component" value="Chromosome I"/>
</dbReference>
<dbReference type="GO" id="GO:0009986">
    <property type="term" value="C:cell surface"/>
    <property type="evidence" value="ECO:0007669"/>
    <property type="project" value="UniProtKB-SubCell"/>
</dbReference>
<dbReference type="GO" id="GO:0005576">
    <property type="term" value="C:extracellular region"/>
    <property type="evidence" value="ECO:0007669"/>
    <property type="project" value="UniProtKB-SubCell"/>
</dbReference>
<dbReference type="GO" id="GO:0000015">
    <property type="term" value="C:phosphopyruvate hydratase complex"/>
    <property type="evidence" value="ECO:0007669"/>
    <property type="project" value="InterPro"/>
</dbReference>
<dbReference type="GO" id="GO:0000287">
    <property type="term" value="F:magnesium ion binding"/>
    <property type="evidence" value="ECO:0007669"/>
    <property type="project" value="UniProtKB-UniRule"/>
</dbReference>
<dbReference type="GO" id="GO:0004634">
    <property type="term" value="F:phosphopyruvate hydratase activity"/>
    <property type="evidence" value="ECO:0007669"/>
    <property type="project" value="UniProtKB-UniRule"/>
</dbReference>
<dbReference type="GO" id="GO:0006096">
    <property type="term" value="P:glycolytic process"/>
    <property type="evidence" value="ECO:0007669"/>
    <property type="project" value="UniProtKB-UniRule"/>
</dbReference>
<dbReference type="CDD" id="cd03313">
    <property type="entry name" value="enolase"/>
    <property type="match status" value="1"/>
</dbReference>
<dbReference type="FunFam" id="3.20.20.120:FF:000001">
    <property type="entry name" value="Enolase"/>
    <property type="match status" value="1"/>
</dbReference>
<dbReference type="FunFam" id="3.30.390.10:FF:000001">
    <property type="entry name" value="Enolase"/>
    <property type="match status" value="1"/>
</dbReference>
<dbReference type="Gene3D" id="3.20.20.120">
    <property type="entry name" value="Enolase-like C-terminal domain"/>
    <property type="match status" value="1"/>
</dbReference>
<dbReference type="Gene3D" id="3.30.390.10">
    <property type="entry name" value="Enolase-like, N-terminal domain"/>
    <property type="match status" value="1"/>
</dbReference>
<dbReference type="HAMAP" id="MF_00318">
    <property type="entry name" value="Enolase"/>
    <property type="match status" value="1"/>
</dbReference>
<dbReference type="InterPro" id="IPR000941">
    <property type="entry name" value="Enolase"/>
</dbReference>
<dbReference type="InterPro" id="IPR036849">
    <property type="entry name" value="Enolase-like_C_sf"/>
</dbReference>
<dbReference type="InterPro" id="IPR029017">
    <property type="entry name" value="Enolase-like_N"/>
</dbReference>
<dbReference type="InterPro" id="IPR020810">
    <property type="entry name" value="Enolase_C"/>
</dbReference>
<dbReference type="InterPro" id="IPR020809">
    <property type="entry name" value="Enolase_CS"/>
</dbReference>
<dbReference type="InterPro" id="IPR020811">
    <property type="entry name" value="Enolase_N"/>
</dbReference>
<dbReference type="NCBIfam" id="TIGR01060">
    <property type="entry name" value="eno"/>
    <property type="match status" value="1"/>
</dbReference>
<dbReference type="PANTHER" id="PTHR11902">
    <property type="entry name" value="ENOLASE"/>
    <property type="match status" value="1"/>
</dbReference>
<dbReference type="PANTHER" id="PTHR11902:SF1">
    <property type="entry name" value="ENOLASE"/>
    <property type="match status" value="1"/>
</dbReference>
<dbReference type="Pfam" id="PF00113">
    <property type="entry name" value="Enolase_C"/>
    <property type="match status" value="1"/>
</dbReference>
<dbReference type="Pfam" id="PF03952">
    <property type="entry name" value="Enolase_N"/>
    <property type="match status" value="1"/>
</dbReference>
<dbReference type="PIRSF" id="PIRSF001400">
    <property type="entry name" value="Enolase"/>
    <property type="match status" value="1"/>
</dbReference>
<dbReference type="PRINTS" id="PR00148">
    <property type="entry name" value="ENOLASE"/>
</dbReference>
<dbReference type="SFLD" id="SFLDF00002">
    <property type="entry name" value="enolase"/>
    <property type="match status" value="1"/>
</dbReference>
<dbReference type="SFLD" id="SFLDG00178">
    <property type="entry name" value="enolase"/>
    <property type="match status" value="1"/>
</dbReference>
<dbReference type="SMART" id="SM01192">
    <property type="entry name" value="Enolase_C"/>
    <property type="match status" value="1"/>
</dbReference>
<dbReference type="SMART" id="SM01193">
    <property type="entry name" value="Enolase_N"/>
    <property type="match status" value="1"/>
</dbReference>
<dbReference type="SUPFAM" id="SSF51604">
    <property type="entry name" value="Enolase C-terminal domain-like"/>
    <property type="match status" value="1"/>
</dbReference>
<dbReference type="SUPFAM" id="SSF54826">
    <property type="entry name" value="Enolase N-terminal domain-like"/>
    <property type="match status" value="1"/>
</dbReference>
<dbReference type="PROSITE" id="PS00164">
    <property type="entry name" value="ENOLASE"/>
    <property type="match status" value="1"/>
</dbReference>
<reference key="1">
    <citation type="journal article" date="2004" name="J. Bacteriol.">
        <title>Comparative genomics of two Leptospira interrogans serovars reveals novel insights into physiology and pathogenesis.</title>
        <authorList>
            <person name="Nascimento A.L.T.O."/>
            <person name="Ko A.I."/>
            <person name="Martins E.A.L."/>
            <person name="Monteiro-Vitorello C.B."/>
            <person name="Ho P.L."/>
            <person name="Haake D.A."/>
            <person name="Verjovski-Almeida S."/>
            <person name="Hartskeerl R.A."/>
            <person name="Marques M.V."/>
            <person name="Oliveira M.C."/>
            <person name="Menck C.F.M."/>
            <person name="Leite L.C.C."/>
            <person name="Carrer H."/>
            <person name="Coutinho L.L."/>
            <person name="Degrave W.M."/>
            <person name="Dellagostin O.A."/>
            <person name="El-Dorry H."/>
            <person name="Ferro E.S."/>
            <person name="Ferro M.I.T."/>
            <person name="Furlan L.R."/>
            <person name="Gamberini M."/>
            <person name="Giglioti E.A."/>
            <person name="Goes-Neto A."/>
            <person name="Goldman G.H."/>
            <person name="Goldman M.H.S."/>
            <person name="Harakava R."/>
            <person name="Jeronimo S.M.B."/>
            <person name="Junqueira-de-Azevedo I.L.M."/>
            <person name="Kimura E.T."/>
            <person name="Kuramae E.E."/>
            <person name="Lemos E.G.M."/>
            <person name="Lemos M.V.F."/>
            <person name="Marino C.L."/>
            <person name="Nunes L.R."/>
            <person name="de Oliveira R.C."/>
            <person name="Pereira G.G."/>
            <person name="Reis M.S."/>
            <person name="Schriefer A."/>
            <person name="Siqueira W.J."/>
            <person name="Sommer P."/>
            <person name="Tsai S.M."/>
            <person name="Simpson A.J.G."/>
            <person name="Ferro J.A."/>
            <person name="Camargo L.E.A."/>
            <person name="Kitajima J.P."/>
            <person name="Setubal J.C."/>
            <person name="Van Sluys M.A."/>
        </authorList>
    </citation>
    <scope>NUCLEOTIDE SEQUENCE [LARGE SCALE GENOMIC DNA]</scope>
    <source>
        <strain>Fiocruz L1-130</strain>
    </source>
</reference>
<gene>
    <name evidence="1" type="primary">eno</name>
    <name type="ordered locus">LIC_11954</name>
</gene>
<keyword id="KW-0963">Cytoplasm</keyword>
<keyword id="KW-0324">Glycolysis</keyword>
<keyword id="KW-0456">Lyase</keyword>
<keyword id="KW-0460">Magnesium</keyword>
<keyword id="KW-0479">Metal-binding</keyword>
<keyword id="KW-0964">Secreted</keyword>
<evidence type="ECO:0000255" key="1">
    <source>
        <dbReference type="HAMAP-Rule" id="MF_00318"/>
    </source>
</evidence>
<comment type="function">
    <text evidence="1">Catalyzes the reversible conversion of 2-phosphoglycerate (2-PG) into phosphoenolpyruvate (PEP). It is essential for the degradation of carbohydrates via glycolysis.</text>
</comment>
<comment type="catalytic activity">
    <reaction evidence="1">
        <text>(2R)-2-phosphoglycerate = phosphoenolpyruvate + H2O</text>
        <dbReference type="Rhea" id="RHEA:10164"/>
        <dbReference type="ChEBI" id="CHEBI:15377"/>
        <dbReference type="ChEBI" id="CHEBI:58289"/>
        <dbReference type="ChEBI" id="CHEBI:58702"/>
        <dbReference type="EC" id="4.2.1.11"/>
    </reaction>
</comment>
<comment type="cofactor">
    <cofactor evidence="1">
        <name>Mg(2+)</name>
        <dbReference type="ChEBI" id="CHEBI:18420"/>
    </cofactor>
    <text evidence="1">Binds a second Mg(2+) ion via substrate during catalysis.</text>
</comment>
<comment type="pathway">
    <text evidence="1">Carbohydrate degradation; glycolysis; pyruvate from D-glyceraldehyde 3-phosphate: step 4/5.</text>
</comment>
<comment type="subcellular location">
    <subcellularLocation>
        <location evidence="1">Cytoplasm</location>
    </subcellularLocation>
    <subcellularLocation>
        <location evidence="1">Secreted</location>
    </subcellularLocation>
    <subcellularLocation>
        <location evidence="1">Cell surface</location>
    </subcellularLocation>
    <text evidence="1">Fractions of enolase are present in both the cytoplasm and on the cell surface.</text>
</comment>
<comment type="similarity">
    <text evidence="1">Belongs to the enolase family.</text>
</comment>
<protein>
    <recommendedName>
        <fullName evidence="1">Enolase</fullName>
        <ecNumber evidence="1">4.2.1.11</ecNumber>
    </recommendedName>
    <alternativeName>
        <fullName evidence="1">2-phospho-D-glycerate hydro-lyase</fullName>
    </alternativeName>
    <alternativeName>
        <fullName evidence="1">2-phosphoglycerate dehydratase</fullName>
    </alternativeName>
</protein>
<organism>
    <name type="scientific">Leptospira interrogans serogroup Icterohaemorrhagiae serovar copenhageni (strain Fiocruz L1-130)</name>
    <dbReference type="NCBI Taxonomy" id="267671"/>
    <lineage>
        <taxon>Bacteria</taxon>
        <taxon>Pseudomonadati</taxon>
        <taxon>Spirochaetota</taxon>
        <taxon>Spirochaetia</taxon>
        <taxon>Leptospirales</taxon>
        <taxon>Leptospiraceae</taxon>
        <taxon>Leptospira</taxon>
    </lineage>
</organism>
<sequence length="432" mass="47045">MSHHSQIQKIQAREIMDSRGNPTVEVDVILLDGSFGRAAVPSGASTGEYEAVELRDGDKHRYLGKGVLKAVEHVNLKIQEVLKGENAIDQNRIDQLMLDADGTKNKGKLGANAILGTSLAVAKAAAAHSKLPLYRYIGGNFARELPVPMMNIINGGAHADNNVDFQEFMILPVGAKSFREALRMGAEIFHSLKSVLKGKKLNTAVGDEGGFAPDLTSNVEAIEVILQAIEKAGYKPEKDVLLGLDAASSEFYDKSKKKYVLGAENNKEFSSAELVDYYANLVSKYPIITIEDGLDENDWDGWKLLSEKLGKKIQLVGDDLFVTNIEKLSKGISSGVGNSILIKVNQIGSLSETLSSIEMAKKAKYTNVVSHRSGETEDVTISHIAVATNAGQIKTGSLSRTDRIAKYNELLRIEEELGKSAVYKGRETFYNL</sequence>
<proteinExistence type="inferred from homology"/>
<feature type="chain" id="PRO_0000133912" description="Enolase">
    <location>
        <begin position="1"/>
        <end position="432"/>
    </location>
</feature>
<feature type="active site" description="Proton donor" evidence="1">
    <location>
        <position position="208"/>
    </location>
</feature>
<feature type="active site" description="Proton acceptor" evidence="1">
    <location>
        <position position="343"/>
    </location>
</feature>
<feature type="binding site" evidence="1">
    <location>
        <position position="166"/>
    </location>
    <ligand>
        <name>(2R)-2-phosphoglycerate</name>
        <dbReference type="ChEBI" id="CHEBI:58289"/>
    </ligand>
</feature>
<feature type="binding site" evidence="1">
    <location>
        <position position="245"/>
    </location>
    <ligand>
        <name>Mg(2+)</name>
        <dbReference type="ChEBI" id="CHEBI:18420"/>
    </ligand>
</feature>
<feature type="binding site" evidence="1">
    <location>
        <position position="291"/>
    </location>
    <ligand>
        <name>Mg(2+)</name>
        <dbReference type="ChEBI" id="CHEBI:18420"/>
    </ligand>
</feature>
<feature type="binding site" evidence="1">
    <location>
        <position position="318"/>
    </location>
    <ligand>
        <name>Mg(2+)</name>
        <dbReference type="ChEBI" id="CHEBI:18420"/>
    </ligand>
</feature>
<feature type="binding site" evidence="1">
    <location>
        <position position="343"/>
    </location>
    <ligand>
        <name>(2R)-2-phosphoglycerate</name>
        <dbReference type="ChEBI" id="CHEBI:58289"/>
    </ligand>
</feature>
<feature type="binding site" evidence="1">
    <location>
        <position position="372"/>
    </location>
    <ligand>
        <name>(2R)-2-phosphoglycerate</name>
        <dbReference type="ChEBI" id="CHEBI:58289"/>
    </ligand>
</feature>
<feature type="binding site" evidence="1">
    <location>
        <position position="373"/>
    </location>
    <ligand>
        <name>(2R)-2-phosphoglycerate</name>
        <dbReference type="ChEBI" id="CHEBI:58289"/>
    </ligand>
</feature>
<feature type="binding site" evidence="1">
    <location>
        <position position="394"/>
    </location>
    <ligand>
        <name>(2R)-2-phosphoglycerate</name>
        <dbReference type="ChEBI" id="CHEBI:58289"/>
    </ligand>
</feature>